<organism>
    <name type="scientific">Psychrobacter sp. (strain PRwf-1)</name>
    <dbReference type="NCBI Taxonomy" id="349106"/>
    <lineage>
        <taxon>Bacteria</taxon>
        <taxon>Pseudomonadati</taxon>
        <taxon>Pseudomonadota</taxon>
        <taxon>Gammaproteobacteria</taxon>
        <taxon>Moraxellales</taxon>
        <taxon>Moraxellaceae</taxon>
        <taxon>Psychrobacter</taxon>
    </lineage>
</organism>
<feature type="chain" id="PRO_1000072567" description="Ribonuclease PH">
    <location>
        <begin position="1"/>
        <end position="238"/>
    </location>
</feature>
<feature type="binding site" evidence="1">
    <location>
        <position position="86"/>
    </location>
    <ligand>
        <name>phosphate</name>
        <dbReference type="ChEBI" id="CHEBI:43474"/>
        <note>substrate</note>
    </ligand>
</feature>
<feature type="binding site" evidence="1">
    <location>
        <begin position="124"/>
        <end position="126"/>
    </location>
    <ligand>
        <name>phosphate</name>
        <dbReference type="ChEBI" id="CHEBI:43474"/>
        <note>substrate</note>
    </ligand>
</feature>
<proteinExistence type="inferred from homology"/>
<accession>A5WHJ0</accession>
<reference key="1">
    <citation type="submission" date="2007-05" db="EMBL/GenBank/DDBJ databases">
        <title>Complete sequence of chromosome of Psychrobacter sp. PRwf-1.</title>
        <authorList>
            <consortium name="US DOE Joint Genome Institute"/>
            <person name="Copeland A."/>
            <person name="Lucas S."/>
            <person name="Lapidus A."/>
            <person name="Barry K."/>
            <person name="Detter J.C."/>
            <person name="Glavina del Rio T."/>
            <person name="Hammon N."/>
            <person name="Israni S."/>
            <person name="Dalin E."/>
            <person name="Tice H."/>
            <person name="Pitluck S."/>
            <person name="Chain P."/>
            <person name="Malfatti S."/>
            <person name="Shin M."/>
            <person name="Vergez L."/>
            <person name="Schmutz J."/>
            <person name="Larimer F."/>
            <person name="Land M."/>
            <person name="Hauser L."/>
            <person name="Kyrpides N."/>
            <person name="Kim E."/>
            <person name="Tiedje J."/>
            <person name="Richardson P."/>
        </authorList>
    </citation>
    <scope>NUCLEOTIDE SEQUENCE [LARGE SCALE GENOMIC DNA]</scope>
    <source>
        <strain>PRwf-1</strain>
    </source>
</reference>
<sequence length="238" mass="26059">MRIDNRELDQLRTVTFERNYTKHAEGSVLVCFGDTKVLCTASVEAGVPRWLKGKGQGWVTAEYGMLPRATNTRNQREAARGKQSGRTQEIQRLIGRSLRAMVDLTKLGENTIYLDCDVLQADGGTRTASITGAAIALIDALEVLQQKKKLKADPLIGLVAAVSVGVKNGEVLLDLNYEEDSSCDTDLNVVMTQKGEFIEIQGTAEEKPFTRAEADKMLAMAEKGIADLVKLQQTALGW</sequence>
<evidence type="ECO:0000255" key="1">
    <source>
        <dbReference type="HAMAP-Rule" id="MF_00564"/>
    </source>
</evidence>
<dbReference type="EC" id="2.7.7.56" evidence="1"/>
<dbReference type="EMBL" id="CP000713">
    <property type="protein sequence ID" value="ABQ95131.1"/>
    <property type="molecule type" value="Genomic_DNA"/>
</dbReference>
<dbReference type="SMR" id="A5WHJ0"/>
<dbReference type="STRING" id="349106.PsycPRwf_2191"/>
<dbReference type="KEGG" id="prw:PsycPRwf_2191"/>
<dbReference type="eggNOG" id="COG0689">
    <property type="taxonomic scope" value="Bacteria"/>
</dbReference>
<dbReference type="HOGENOM" id="CLU_050858_0_0_6"/>
<dbReference type="GO" id="GO:0000175">
    <property type="term" value="F:3'-5'-RNA exonuclease activity"/>
    <property type="evidence" value="ECO:0007669"/>
    <property type="project" value="UniProtKB-UniRule"/>
</dbReference>
<dbReference type="GO" id="GO:0000049">
    <property type="term" value="F:tRNA binding"/>
    <property type="evidence" value="ECO:0007669"/>
    <property type="project" value="UniProtKB-UniRule"/>
</dbReference>
<dbReference type="GO" id="GO:0009022">
    <property type="term" value="F:tRNA nucleotidyltransferase activity"/>
    <property type="evidence" value="ECO:0007669"/>
    <property type="project" value="UniProtKB-UniRule"/>
</dbReference>
<dbReference type="GO" id="GO:0016075">
    <property type="term" value="P:rRNA catabolic process"/>
    <property type="evidence" value="ECO:0007669"/>
    <property type="project" value="UniProtKB-UniRule"/>
</dbReference>
<dbReference type="GO" id="GO:0006364">
    <property type="term" value="P:rRNA processing"/>
    <property type="evidence" value="ECO:0007669"/>
    <property type="project" value="UniProtKB-KW"/>
</dbReference>
<dbReference type="GO" id="GO:0008033">
    <property type="term" value="P:tRNA processing"/>
    <property type="evidence" value="ECO:0007669"/>
    <property type="project" value="UniProtKB-UniRule"/>
</dbReference>
<dbReference type="CDD" id="cd11362">
    <property type="entry name" value="RNase_PH_bact"/>
    <property type="match status" value="1"/>
</dbReference>
<dbReference type="FunFam" id="3.30.230.70:FF:000003">
    <property type="entry name" value="Ribonuclease PH"/>
    <property type="match status" value="1"/>
</dbReference>
<dbReference type="Gene3D" id="3.30.230.70">
    <property type="entry name" value="GHMP Kinase, N-terminal domain"/>
    <property type="match status" value="1"/>
</dbReference>
<dbReference type="HAMAP" id="MF_00564">
    <property type="entry name" value="RNase_PH"/>
    <property type="match status" value="1"/>
</dbReference>
<dbReference type="InterPro" id="IPR001247">
    <property type="entry name" value="ExoRNase_PH_dom1"/>
</dbReference>
<dbReference type="InterPro" id="IPR015847">
    <property type="entry name" value="ExoRNase_PH_dom2"/>
</dbReference>
<dbReference type="InterPro" id="IPR036345">
    <property type="entry name" value="ExoRNase_PH_dom2_sf"/>
</dbReference>
<dbReference type="InterPro" id="IPR027408">
    <property type="entry name" value="PNPase/RNase_PH_dom_sf"/>
</dbReference>
<dbReference type="InterPro" id="IPR020568">
    <property type="entry name" value="Ribosomal_Su5_D2-typ_SF"/>
</dbReference>
<dbReference type="InterPro" id="IPR050080">
    <property type="entry name" value="RNase_PH"/>
</dbReference>
<dbReference type="InterPro" id="IPR002381">
    <property type="entry name" value="RNase_PH_bac-type"/>
</dbReference>
<dbReference type="InterPro" id="IPR018336">
    <property type="entry name" value="RNase_PH_CS"/>
</dbReference>
<dbReference type="NCBIfam" id="TIGR01966">
    <property type="entry name" value="RNasePH"/>
    <property type="match status" value="1"/>
</dbReference>
<dbReference type="PANTHER" id="PTHR11953">
    <property type="entry name" value="EXOSOME COMPLEX COMPONENT"/>
    <property type="match status" value="1"/>
</dbReference>
<dbReference type="PANTHER" id="PTHR11953:SF0">
    <property type="entry name" value="EXOSOME COMPLEX COMPONENT RRP41"/>
    <property type="match status" value="1"/>
</dbReference>
<dbReference type="Pfam" id="PF01138">
    <property type="entry name" value="RNase_PH"/>
    <property type="match status" value="1"/>
</dbReference>
<dbReference type="Pfam" id="PF03725">
    <property type="entry name" value="RNase_PH_C"/>
    <property type="match status" value="1"/>
</dbReference>
<dbReference type="SUPFAM" id="SSF55666">
    <property type="entry name" value="Ribonuclease PH domain 2-like"/>
    <property type="match status" value="1"/>
</dbReference>
<dbReference type="SUPFAM" id="SSF54211">
    <property type="entry name" value="Ribosomal protein S5 domain 2-like"/>
    <property type="match status" value="1"/>
</dbReference>
<dbReference type="PROSITE" id="PS01277">
    <property type="entry name" value="RIBONUCLEASE_PH"/>
    <property type="match status" value="1"/>
</dbReference>
<keyword id="KW-0548">Nucleotidyltransferase</keyword>
<keyword id="KW-0694">RNA-binding</keyword>
<keyword id="KW-0698">rRNA processing</keyword>
<keyword id="KW-0808">Transferase</keyword>
<keyword id="KW-0819">tRNA processing</keyword>
<keyword id="KW-0820">tRNA-binding</keyword>
<protein>
    <recommendedName>
        <fullName evidence="1">Ribonuclease PH</fullName>
        <shortName evidence="1">RNase PH</shortName>
        <ecNumber evidence="1">2.7.7.56</ecNumber>
    </recommendedName>
    <alternativeName>
        <fullName evidence="1">tRNA nucleotidyltransferase</fullName>
    </alternativeName>
</protein>
<comment type="function">
    <text evidence="1">Phosphorolytic 3'-5' exoribonuclease that plays an important role in tRNA 3'-end maturation. Removes nucleotide residues following the 3'-CCA terminus of tRNAs; can also add nucleotides to the ends of RNA molecules by using nucleoside diphosphates as substrates, but this may not be physiologically important. Probably plays a role in initiation of 16S rRNA degradation (leading to ribosome degradation) during starvation.</text>
</comment>
<comment type="catalytic activity">
    <reaction evidence="1">
        <text>tRNA(n+1) + phosphate = tRNA(n) + a ribonucleoside 5'-diphosphate</text>
        <dbReference type="Rhea" id="RHEA:10628"/>
        <dbReference type="Rhea" id="RHEA-COMP:17343"/>
        <dbReference type="Rhea" id="RHEA-COMP:17344"/>
        <dbReference type="ChEBI" id="CHEBI:43474"/>
        <dbReference type="ChEBI" id="CHEBI:57930"/>
        <dbReference type="ChEBI" id="CHEBI:173114"/>
        <dbReference type="EC" id="2.7.7.56"/>
    </reaction>
</comment>
<comment type="subunit">
    <text evidence="1">Homohexameric ring arranged as a trimer of dimers.</text>
</comment>
<comment type="similarity">
    <text evidence="1">Belongs to the RNase PH family.</text>
</comment>
<name>RNPH_PSYWF</name>
<gene>
    <name evidence="1" type="primary">rph</name>
    <name type="ordered locus">PsycPRwf_2191</name>
</gene>